<dbReference type="EC" id="3.1.-.-"/>
<dbReference type="EMBL" id="DQ157700">
    <property type="protein sequence ID" value="AAZ67030.1"/>
    <property type="status" value="ALT_INIT"/>
    <property type="molecule type" value="Genomic_DNA"/>
</dbReference>
<dbReference type="EMBL" id="AACP01000277">
    <property type="status" value="NOT_ANNOTATED_CDS"/>
    <property type="molecule type" value="Genomic_DNA"/>
</dbReference>
<dbReference type="SMR" id="Q0H8X2"/>
<dbReference type="STRING" id="237631.Q0H8X2"/>
<dbReference type="InParanoid" id="Q0H8X2"/>
<dbReference type="Proteomes" id="UP000000561">
    <property type="component" value="Mitochondrion"/>
</dbReference>
<dbReference type="GO" id="GO:0016020">
    <property type="term" value="C:membrane"/>
    <property type="evidence" value="ECO:0000318"/>
    <property type="project" value="GO_Central"/>
</dbReference>
<dbReference type="GO" id="GO:0005739">
    <property type="term" value="C:mitochondrion"/>
    <property type="evidence" value="ECO:0007669"/>
    <property type="project" value="UniProtKB-SubCell"/>
</dbReference>
<dbReference type="GO" id="GO:0045275">
    <property type="term" value="C:respiratory chain complex III"/>
    <property type="evidence" value="ECO:0000318"/>
    <property type="project" value="GO_Central"/>
</dbReference>
<dbReference type="GO" id="GO:0003677">
    <property type="term" value="F:DNA binding"/>
    <property type="evidence" value="ECO:0007669"/>
    <property type="project" value="InterPro"/>
</dbReference>
<dbReference type="GO" id="GO:0004519">
    <property type="term" value="F:endonuclease activity"/>
    <property type="evidence" value="ECO:0007669"/>
    <property type="project" value="UniProtKB-KW"/>
</dbReference>
<dbReference type="GO" id="GO:0006314">
    <property type="term" value="P:intron homing"/>
    <property type="evidence" value="ECO:0007669"/>
    <property type="project" value="UniProtKB-KW"/>
</dbReference>
<dbReference type="GO" id="GO:0006122">
    <property type="term" value="P:mitochondrial electron transport, ubiquinol to cytochrome c"/>
    <property type="evidence" value="ECO:0000318"/>
    <property type="project" value="GO_Central"/>
</dbReference>
<dbReference type="GO" id="GO:1902600">
    <property type="term" value="P:proton transmembrane transport"/>
    <property type="evidence" value="ECO:0007669"/>
    <property type="project" value="GOC"/>
</dbReference>
<dbReference type="CDD" id="cd00284">
    <property type="entry name" value="Cytochrome_b_N"/>
    <property type="match status" value="1"/>
</dbReference>
<dbReference type="CDD" id="cd10445">
    <property type="entry name" value="GIY-YIG_bI1_like"/>
    <property type="match status" value="1"/>
</dbReference>
<dbReference type="FunFam" id="3.40.1440.10:FF:000007">
    <property type="entry name" value="I-TevI homing endonuclease"/>
    <property type="match status" value="1"/>
</dbReference>
<dbReference type="Gene3D" id="1.20.810.10">
    <property type="entry name" value="Cytochrome Bc1 Complex, Chain C"/>
    <property type="match status" value="1"/>
</dbReference>
<dbReference type="Gene3D" id="3.40.1440.10">
    <property type="entry name" value="GIY-YIG endonuclease"/>
    <property type="match status" value="1"/>
</dbReference>
<dbReference type="Gene3D" id="1.10.10.10">
    <property type="entry name" value="Winged helix-like DNA-binding domain superfamily/Winged helix DNA-binding domain"/>
    <property type="match status" value="1"/>
</dbReference>
<dbReference type="InterPro" id="IPR005797">
    <property type="entry name" value="Cyt_b/b6_N"/>
</dbReference>
<dbReference type="InterPro" id="IPR027387">
    <property type="entry name" value="Cytb/b6-like_sf"/>
</dbReference>
<dbReference type="InterPro" id="IPR048259">
    <property type="entry name" value="Cytochrome_b_N_euk/bac"/>
</dbReference>
<dbReference type="InterPro" id="IPR016174">
    <property type="entry name" value="Di-haem_cyt_TM"/>
</dbReference>
<dbReference type="InterPro" id="IPR000305">
    <property type="entry name" value="GIY-YIG_endonuc"/>
</dbReference>
<dbReference type="InterPro" id="IPR035901">
    <property type="entry name" value="GIY-YIG_endonuc_sf"/>
</dbReference>
<dbReference type="InterPro" id="IPR006350">
    <property type="entry name" value="Intron_endoG1"/>
</dbReference>
<dbReference type="InterPro" id="IPR003647">
    <property type="entry name" value="Intron_nuc_1_rpt"/>
</dbReference>
<dbReference type="InterPro" id="IPR010896">
    <property type="entry name" value="NUMOD1"/>
</dbReference>
<dbReference type="InterPro" id="IPR003611">
    <property type="entry name" value="NUMOD3"/>
</dbReference>
<dbReference type="InterPro" id="IPR036388">
    <property type="entry name" value="WH-like_DNA-bd_sf"/>
</dbReference>
<dbReference type="NCBIfam" id="TIGR01453">
    <property type="entry name" value="grpIintron_endo"/>
    <property type="match status" value="1"/>
</dbReference>
<dbReference type="PANTHER" id="PTHR19271">
    <property type="entry name" value="CYTOCHROME B"/>
    <property type="match status" value="1"/>
</dbReference>
<dbReference type="PANTHER" id="PTHR19271:SF16">
    <property type="entry name" value="CYTOCHROME B"/>
    <property type="match status" value="1"/>
</dbReference>
<dbReference type="Pfam" id="PF00033">
    <property type="entry name" value="Cytochrome_B"/>
    <property type="match status" value="1"/>
</dbReference>
<dbReference type="Pfam" id="PF01541">
    <property type="entry name" value="GIY-YIG"/>
    <property type="match status" value="1"/>
</dbReference>
<dbReference type="Pfam" id="PF07453">
    <property type="entry name" value="NUMOD1"/>
    <property type="match status" value="1"/>
</dbReference>
<dbReference type="Pfam" id="PF07460">
    <property type="entry name" value="NUMOD3"/>
    <property type="match status" value="1"/>
</dbReference>
<dbReference type="SMART" id="SM00465">
    <property type="entry name" value="GIYc"/>
    <property type="match status" value="1"/>
</dbReference>
<dbReference type="SMART" id="SM00497">
    <property type="entry name" value="IENR1"/>
    <property type="match status" value="1"/>
</dbReference>
<dbReference type="SMART" id="SM00496">
    <property type="entry name" value="IENR2"/>
    <property type="match status" value="2"/>
</dbReference>
<dbReference type="SUPFAM" id="SSF64496">
    <property type="entry name" value="DNA-binding domain of intron-encoded endonucleases"/>
    <property type="match status" value="1"/>
</dbReference>
<dbReference type="SUPFAM" id="SSF82771">
    <property type="entry name" value="GIY-YIG endonuclease"/>
    <property type="match status" value="1"/>
</dbReference>
<dbReference type="SUPFAM" id="SSF81342">
    <property type="entry name" value="Transmembrane di-heme cytochromes"/>
    <property type="match status" value="1"/>
</dbReference>
<dbReference type="PROSITE" id="PS51002">
    <property type="entry name" value="CYTB_NTER"/>
    <property type="match status" value="1"/>
</dbReference>
<dbReference type="PROSITE" id="PS50164">
    <property type="entry name" value="GIY_YIG"/>
    <property type="match status" value="1"/>
</dbReference>
<proteinExistence type="inferred from homology"/>
<protein>
    <recommendedName>
        <fullName>Probable intron-encoded endonuclease bI1</fullName>
    </recommendedName>
    <component>
        <recommendedName>
            <fullName>Truncated non-functional cytochrome b</fullName>
        </recommendedName>
    </component>
    <component>
        <recommendedName>
            <fullName>Intron-encoded endonuclease bI1</fullName>
            <ecNumber>3.1.-.-</ecNumber>
        </recommendedName>
    </component>
</protein>
<comment type="function">
    <text evidence="1">Mitochondrial DNA endonuclease involved in intron homing.</text>
</comment>
<comment type="subcellular location">
    <subcellularLocation>
        <location>Mitochondrion</location>
    </subcellularLocation>
    <subcellularLocation>
        <location evidence="4">Membrane</location>
        <topology evidence="4">Multi-pass membrane protein</topology>
    </subcellularLocation>
</comment>
<comment type="PTM">
    <text>The mature protein may arise from proteolytic cleavage of an in-frame translation of COB exon 1 plus intron 1, containing the bI1 open reading frame.</text>
</comment>
<comment type="similarity">
    <text evidence="4">To endonucleases of group I introns of fungi and phage.</text>
</comment>
<comment type="sequence caution" evidence="4">
    <conflict type="erroneous initiation">
        <sequence resource="EMBL-CDS" id="AAZ67030"/>
    </conflict>
</comment>
<geneLocation type="mitochondrion"/>
<keyword id="KW-0255">Endonuclease</keyword>
<keyword id="KW-0378">Hydrolase</keyword>
<keyword id="KW-0404">Intron homing</keyword>
<keyword id="KW-0472">Membrane</keyword>
<keyword id="KW-0496">Mitochondrion</keyword>
<keyword id="KW-0540">Nuclease</keyword>
<keyword id="KW-1185">Reference proteome</keyword>
<keyword id="KW-0812">Transmembrane</keyword>
<keyword id="KW-1133">Transmembrane helix</keyword>
<evidence type="ECO:0000250" key="1"/>
<evidence type="ECO:0000255" key="2">
    <source>
        <dbReference type="PROSITE-ProRule" id="PRU00968"/>
    </source>
</evidence>
<evidence type="ECO:0000255" key="3">
    <source>
        <dbReference type="PROSITE-ProRule" id="PRU00977"/>
    </source>
</evidence>
<evidence type="ECO:0000305" key="4"/>
<name>BI1_MYCMD</name>
<reference key="1">
    <citation type="submission" date="2005-08" db="EMBL/GenBank/DDBJ databases">
        <title>Annotation of mitochondrial genome of Ustilago maydis and comparative analysis of basidiomycete mtDNAs.</title>
        <authorList>
            <person name="Kennell J.C."/>
            <person name="Boehmer C."/>
        </authorList>
    </citation>
    <scope>NUCLEOTIDE SEQUENCE [LARGE SCALE GENOMIC DNA]</scope>
    <source>
        <strain>DSM 14603 / FGSC 9021 / UM521</strain>
    </source>
</reference>
<reference key="2">
    <citation type="journal article" date="2006" name="Nature">
        <title>Insights from the genome of the biotrophic fungal plant pathogen Ustilago maydis.</title>
        <authorList>
            <person name="Kaemper J."/>
            <person name="Kahmann R."/>
            <person name="Boelker M."/>
            <person name="Ma L.-J."/>
            <person name="Brefort T."/>
            <person name="Saville B.J."/>
            <person name="Banuett F."/>
            <person name="Kronstad J.W."/>
            <person name="Gold S.E."/>
            <person name="Mueller O."/>
            <person name="Perlin M.H."/>
            <person name="Woesten H.A.B."/>
            <person name="de Vries R."/>
            <person name="Ruiz-Herrera J."/>
            <person name="Reynaga-Pena C.G."/>
            <person name="Snetselaar K."/>
            <person name="McCann M."/>
            <person name="Perez-Martin J."/>
            <person name="Feldbruegge M."/>
            <person name="Basse C.W."/>
            <person name="Steinberg G."/>
            <person name="Ibeas J.I."/>
            <person name="Holloman W."/>
            <person name="Guzman P."/>
            <person name="Farman M.L."/>
            <person name="Stajich J.E."/>
            <person name="Sentandreu R."/>
            <person name="Gonzalez-Prieto J.M."/>
            <person name="Kennell J.C."/>
            <person name="Molina L."/>
            <person name="Schirawski J."/>
            <person name="Mendoza-Mendoza A."/>
            <person name="Greilinger D."/>
            <person name="Muench K."/>
            <person name="Roessel N."/>
            <person name="Scherer M."/>
            <person name="Vranes M."/>
            <person name="Ladendorf O."/>
            <person name="Vincon V."/>
            <person name="Fuchs U."/>
            <person name="Sandrock B."/>
            <person name="Meng S."/>
            <person name="Ho E.C.H."/>
            <person name="Cahill M.J."/>
            <person name="Boyce K.J."/>
            <person name="Klose J."/>
            <person name="Klosterman S.J."/>
            <person name="Deelstra H.J."/>
            <person name="Ortiz-Castellanos L."/>
            <person name="Li W."/>
            <person name="Sanchez-Alonso P."/>
            <person name="Schreier P.H."/>
            <person name="Haeuser-Hahn I."/>
            <person name="Vaupel M."/>
            <person name="Koopmann E."/>
            <person name="Friedrich G."/>
            <person name="Voss H."/>
            <person name="Schlueter T."/>
            <person name="Margolis J."/>
            <person name="Platt D."/>
            <person name="Swimmer C."/>
            <person name="Gnirke A."/>
            <person name="Chen F."/>
            <person name="Vysotskaia V."/>
            <person name="Mannhaupt G."/>
            <person name="Gueldener U."/>
            <person name="Muensterkoetter M."/>
            <person name="Haase D."/>
            <person name="Oesterheld M."/>
            <person name="Mewes H.-W."/>
            <person name="Mauceli E.W."/>
            <person name="DeCaprio D."/>
            <person name="Wade C.M."/>
            <person name="Butler J."/>
            <person name="Young S.K."/>
            <person name="Jaffe D.B."/>
            <person name="Calvo S.E."/>
            <person name="Nusbaum C."/>
            <person name="Galagan J.E."/>
            <person name="Birren B.W."/>
        </authorList>
    </citation>
    <scope>NUCLEOTIDE SEQUENCE [LARGE SCALE GENOMIC DNA]</scope>
    <source>
        <strain>DSM 14603 / FGSC 9021 / UM521</strain>
    </source>
</reference>
<accession>Q0H8X2</accession>
<feature type="chain" id="PRO_0000271164" description="Truncated non-functional cytochrome b">
    <location>
        <begin position="1"/>
        <end status="unknown"/>
    </location>
</feature>
<feature type="chain" id="PRO_0000271165" description="Intron-encoded endonuclease bI1">
    <location>
        <begin status="unknown"/>
        <end position="410"/>
    </location>
</feature>
<feature type="transmembrane region" description="Helical" evidence="2">
    <location>
        <begin position="32"/>
        <end position="52"/>
    </location>
</feature>
<feature type="transmembrane region" description="Helical" evidence="2">
    <location>
        <begin position="75"/>
        <end position="95"/>
    </location>
</feature>
<feature type="transmembrane region" description="Helical" evidence="2">
    <location>
        <begin position="112"/>
        <end position="132"/>
    </location>
</feature>
<feature type="domain" description="GIY-YIG" evidence="3">
    <location>
        <begin position="196"/>
        <end position="286"/>
    </location>
</feature>
<feature type="region of interest" description="COB exon 1 encoded">
    <location>
        <begin position="1"/>
        <end position="131"/>
    </location>
</feature>
<feature type="region of interest" description="COB intron 1 encoded">
    <location>
        <begin position="132"/>
        <end position="410"/>
    </location>
</feature>
<gene>
    <name type="primary">bI1</name>
</gene>
<organism>
    <name type="scientific">Mycosarcoma maydis</name>
    <name type="common">Corn smut fungus</name>
    <name type="synonym">Ustilago maydis</name>
    <dbReference type="NCBI Taxonomy" id="5270"/>
    <lineage>
        <taxon>Eukaryota</taxon>
        <taxon>Fungi</taxon>
        <taxon>Dikarya</taxon>
        <taxon>Basidiomycota</taxon>
        <taxon>Ustilaginomycotina</taxon>
        <taxon>Ustilaginomycetes</taxon>
        <taxon>Ustilaginales</taxon>
        <taxon>Ustilaginaceae</taxon>
        <taxon>Mycosarcoma</taxon>
    </lineage>
</organism>
<sequence>MRLLKTHPILGLANSYLIDSPQPSNISYMWNFGSLLGVCLIIQILTGVFLAMHYTPSVDLAFISVEHIMRDVNYGWLIRYLHANTASFFFIFVYLHIGRGLYYGSYKSPRTLLWSIGVIILVLMMAIAFLGFNGQKYMCFYNIDITIIQYLSIPTLITPSTRLKPILDKHNIKPVLLFENLTNSETKKIAYQALKPFSGIYMIVNLITEKYYVGSAVTGNLYMRFHKHLFSFTGNKRVANAVNKYGLSEFAFLVLEIVPQKDKIDSTLLLNREDYYLETLKPEYNIAPLASNSLGWKHSEESLAKMRENYSEERRQQVANINKGKTLSEETRELIRKSALLRKSMSSETRMKCAVNVQPVTIINLDGTNIMNFVSIKEASIAISCNEKTIRRALNGNGIVKKNYIVKVIK</sequence>